<gene>
    <name evidence="1" type="primary">glyS</name>
    <name type="ordered locus">E2348C_3810</name>
</gene>
<comment type="catalytic activity">
    <reaction evidence="1">
        <text>tRNA(Gly) + glycine + ATP = glycyl-tRNA(Gly) + AMP + diphosphate</text>
        <dbReference type="Rhea" id="RHEA:16013"/>
        <dbReference type="Rhea" id="RHEA-COMP:9664"/>
        <dbReference type="Rhea" id="RHEA-COMP:9683"/>
        <dbReference type="ChEBI" id="CHEBI:30616"/>
        <dbReference type="ChEBI" id="CHEBI:33019"/>
        <dbReference type="ChEBI" id="CHEBI:57305"/>
        <dbReference type="ChEBI" id="CHEBI:78442"/>
        <dbReference type="ChEBI" id="CHEBI:78522"/>
        <dbReference type="ChEBI" id="CHEBI:456215"/>
        <dbReference type="EC" id="6.1.1.14"/>
    </reaction>
</comment>
<comment type="subunit">
    <text evidence="1">Tetramer of two alpha and two beta subunits.</text>
</comment>
<comment type="subcellular location">
    <subcellularLocation>
        <location evidence="1">Cytoplasm</location>
    </subcellularLocation>
</comment>
<comment type="similarity">
    <text evidence="1">Belongs to the class-II aminoacyl-tRNA synthetase family.</text>
</comment>
<organism>
    <name type="scientific">Escherichia coli O127:H6 (strain E2348/69 / EPEC)</name>
    <dbReference type="NCBI Taxonomy" id="574521"/>
    <lineage>
        <taxon>Bacteria</taxon>
        <taxon>Pseudomonadati</taxon>
        <taxon>Pseudomonadota</taxon>
        <taxon>Gammaproteobacteria</taxon>
        <taxon>Enterobacterales</taxon>
        <taxon>Enterobacteriaceae</taxon>
        <taxon>Escherichia</taxon>
    </lineage>
</organism>
<dbReference type="EC" id="6.1.1.14" evidence="1"/>
<dbReference type="EMBL" id="FM180568">
    <property type="protein sequence ID" value="CAS11358.1"/>
    <property type="molecule type" value="Genomic_DNA"/>
</dbReference>
<dbReference type="RefSeq" id="WP_001291788.1">
    <property type="nucleotide sequence ID" value="NC_011601.1"/>
</dbReference>
<dbReference type="SMR" id="B7ULB9"/>
<dbReference type="GeneID" id="75173758"/>
<dbReference type="KEGG" id="ecg:E2348C_3810"/>
<dbReference type="HOGENOM" id="CLU_007220_2_2_6"/>
<dbReference type="Proteomes" id="UP000008205">
    <property type="component" value="Chromosome"/>
</dbReference>
<dbReference type="GO" id="GO:0005829">
    <property type="term" value="C:cytosol"/>
    <property type="evidence" value="ECO:0007669"/>
    <property type="project" value="TreeGrafter"/>
</dbReference>
<dbReference type="GO" id="GO:0004814">
    <property type="term" value="F:arginine-tRNA ligase activity"/>
    <property type="evidence" value="ECO:0007669"/>
    <property type="project" value="InterPro"/>
</dbReference>
<dbReference type="GO" id="GO:0005524">
    <property type="term" value="F:ATP binding"/>
    <property type="evidence" value="ECO:0007669"/>
    <property type="project" value="UniProtKB-UniRule"/>
</dbReference>
<dbReference type="GO" id="GO:0004820">
    <property type="term" value="F:glycine-tRNA ligase activity"/>
    <property type="evidence" value="ECO:0007669"/>
    <property type="project" value="UniProtKB-UniRule"/>
</dbReference>
<dbReference type="GO" id="GO:0006420">
    <property type="term" value="P:arginyl-tRNA aminoacylation"/>
    <property type="evidence" value="ECO:0007669"/>
    <property type="project" value="InterPro"/>
</dbReference>
<dbReference type="GO" id="GO:0006426">
    <property type="term" value="P:glycyl-tRNA aminoacylation"/>
    <property type="evidence" value="ECO:0007669"/>
    <property type="project" value="UniProtKB-UniRule"/>
</dbReference>
<dbReference type="HAMAP" id="MF_00255">
    <property type="entry name" value="Gly_tRNA_synth_beta"/>
    <property type="match status" value="1"/>
</dbReference>
<dbReference type="InterPro" id="IPR008909">
    <property type="entry name" value="DALR_anticod-bd"/>
</dbReference>
<dbReference type="InterPro" id="IPR015944">
    <property type="entry name" value="Gly-tRNA-synth_bsu"/>
</dbReference>
<dbReference type="InterPro" id="IPR006194">
    <property type="entry name" value="Gly-tRNA-synth_heterodimer"/>
</dbReference>
<dbReference type="NCBIfam" id="TIGR00211">
    <property type="entry name" value="glyS"/>
    <property type="match status" value="1"/>
</dbReference>
<dbReference type="PANTHER" id="PTHR30075:SF2">
    <property type="entry name" value="GLYCINE--TRNA LIGASE, CHLOROPLASTIC_MITOCHONDRIAL 2"/>
    <property type="match status" value="1"/>
</dbReference>
<dbReference type="PANTHER" id="PTHR30075">
    <property type="entry name" value="GLYCYL-TRNA SYNTHETASE"/>
    <property type="match status" value="1"/>
</dbReference>
<dbReference type="Pfam" id="PF05746">
    <property type="entry name" value="DALR_1"/>
    <property type="match status" value="1"/>
</dbReference>
<dbReference type="Pfam" id="PF02092">
    <property type="entry name" value="tRNA_synt_2f"/>
    <property type="match status" value="1"/>
</dbReference>
<dbReference type="PRINTS" id="PR01045">
    <property type="entry name" value="TRNASYNTHGB"/>
</dbReference>
<dbReference type="SUPFAM" id="SSF109604">
    <property type="entry name" value="HD-domain/PDEase-like"/>
    <property type="match status" value="1"/>
</dbReference>
<dbReference type="PROSITE" id="PS50861">
    <property type="entry name" value="AA_TRNA_LIGASE_II_GLYAB"/>
    <property type="match status" value="1"/>
</dbReference>
<reference key="1">
    <citation type="journal article" date="2009" name="J. Bacteriol.">
        <title>Complete genome sequence and comparative genome analysis of enteropathogenic Escherichia coli O127:H6 strain E2348/69.</title>
        <authorList>
            <person name="Iguchi A."/>
            <person name="Thomson N.R."/>
            <person name="Ogura Y."/>
            <person name="Saunders D."/>
            <person name="Ooka T."/>
            <person name="Henderson I.R."/>
            <person name="Harris D."/>
            <person name="Asadulghani M."/>
            <person name="Kurokawa K."/>
            <person name="Dean P."/>
            <person name="Kenny B."/>
            <person name="Quail M.A."/>
            <person name="Thurston S."/>
            <person name="Dougan G."/>
            <person name="Hayashi T."/>
            <person name="Parkhill J."/>
            <person name="Frankel G."/>
        </authorList>
    </citation>
    <scope>NUCLEOTIDE SEQUENCE [LARGE SCALE GENOMIC DNA]</scope>
    <source>
        <strain>E2348/69 / EPEC</strain>
    </source>
</reference>
<feature type="chain" id="PRO_1000197189" description="Glycine--tRNA ligase beta subunit">
    <location>
        <begin position="1"/>
        <end position="689"/>
    </location>
</feature>
<keyword id="KW-0030">Aminoacyl-tRNA synthetase</keyword>
<keyword id="KW-0067">ATP-binding</keyword>
<keyword id="KW-0963">Cytoplasm</keyword>
<keyword id="KW-0436">Ligase</keyword>
<keyword id="KW-0547">Nucleotide-binding</keyword>
<keyword id="KW-0648">Protein biosynthesis</keyword>
<keyword id="KW-1185">Reference proteome</keyword>
<sequence length="689" mass="76813">MSEKTFLVEIGTEELPPKALRSLAESFAANFTAELDNAGLAHGTVQWFAAPRRLALKVANLAEAQPDREIEKRGPAIAQAFDAEGKPSKAAEGWARGCGITVDQAERLTTDKGEWLLYRAHVKGESTEALLPNMVATSLAKLPIPKLMRWGASDVHFVRPVHTVTLLLGDKVIPATILGIQSDRVIRGHRFMGEPEFTIDNADQYPEILRERGKVIADYEERKAKIKADAEEAARKIGGNADLSESLLEEVASLVEWPVVLTAKFEEKFLAVPSEALVYTMKGDQKYFPVYANDGKLLPNFIFVANIESKDPQQIISGNEKVVRPRLADAEFFFNTDRKKRLEDNLPRLQTVLFQQQLGTLRDKTDRIQALAGWIAEQIGADVNHATRAGLLSKCDLMTNMVFEFTDTQGVMGMHYARHDGEAEDVAVALNEQYQPRFAGDDLPSNPVACALAIADKMDTLAGIFGIGQHPKGDKDPFALRRAALGVLRIIVEKNLNLDLQTLTEEAVRLYGDKLTNANVVDDVIDFMLGRFRAWYQDEGYTVDTIQAVLARRPTRPADFDARMKAVSHFRTLEAAAALAAANKRVSNILAKSDEVLSDRVNASTLKEPEEIKLAMQVVVLRDKLEPYFAEGRYQDALVELAELREPVDAFFDKVMVMVDDKELRINRLTMLEKLRELFLRVADISLLQ</sequence>
<proteinExistence type="inferred from homology"/>
<evidence type="ECO:0000255" key="1">
    <source>
        <dbReference type="HAMAP-Rule" id="MF_00255"/>
    </source>
</evidence>
<name>SYGB_ECO27</name>
<protein>
    <recommendedName>
        <fullName evidence="1">Glycine--tRNA ligase beta subunit</fullName>
        <ecNumber evidence="1">6.1.1.14</ecNumber>
    </recommendedName>
    <alternativeName>
        <fullName evidence="1">Glycyl-tRNA synthetase beta subunit</fullName>
        <shortName evidence="1">GlyRS</shortName>
    </alternativeName>
</protein>
<accession>B7ULB9</accession>